<comment type="function">
    <text evidence="1">Catalyzes the attachment of glutamate to tRNA(Glu) in a two-step reaction: glutamate is first activated by ATP to form Glu-AMP and then transferred to the acceptor end of tRNA(Glu).</text>
</comment>
<comment type="catalytic activity">
    <reaction evidence="1">
        <text>tRNA(Glu) + L-glutamate + ATP = L-glutamyl-tRNA(Glu) + AMP + diphosphate</text>
        <dbReference type="Rhea" id="RHEA:23540"/>
        <dbReference type="Rhea" id="RHEA-COMP:9663"/>
        <dbReference type="Rhea" id="RHEA-COMP:9680"/>
        <dbReference type="ChEBI" id="CHEBI:29985"/>
        <dbReference type="ChEBI" id="CHEBI:30616"/>
        <dbReference type="ChEBI" id="CHEBI:33019"/>
        <dbReference type="ChEBI" id="CHEBI:78442"/>
        <dbReference type="ChEBI" id="CHEBI:78520"/>
        <dbReference type="ChEBI" id="CHEBI:456215"/>
        <dbReference type="EC" id="6.1.1.17"/>
    </reaction>
</comment>
<comment type="subunit">
    <text evidence="1">Monomer.</text>
</comment>
<comment type="subcellular location">
    <subcellularLocation>
        <location evidence="1">Cytoplasm</location>
    </subcellularLocation>
</comment>
<comment type="similarity">
    <text evidence="1">Belongs to the class-I aminoacyl-tRNA synthetase family. Glutamate--tRNA ligase type 1 subfamily.</text>
</comment>
<gene>
    <name evidence="1" type="primary">gltX1</name>
    <name type="ordered locus">Hac_1071</name>
</gene>
<organism>
    <name type="scientific">Helicobacter acinonychis (strain Sheeba)</name>
    <dbReference type="NCBI Taxonomy" id="382638"/>
    <lineage>
        <taxon>Bacteria</taxon>
        <taxon>Pseudomonadati</taxon>
        <taxon>Campylobacterota</taxon>
        <taxon>Epsilonproteobacteria</taxon>
        <taxon>Campylobacterales</taxon>
        <taxon>Helicobacteraceae</taxon>
        <taxon>Helicobacter</taxon>
    </lineage>
</organism>
<keyword id="KW-0030">Aminoacyl-tRNA synthetase</keyword>
<keyword id="KW-0067">ATP-binding</keyword>
<keyword id="KW-0963">Cytoplasm</keyword>
<keyword id="KW-0436">Ligase</keyword>
<keyword id="KW-0547">Nucleotide-binding</keyword>
<keyword id="KW-0648">Protein biosynthesis</keyword>
<sequence length="439" mass="51278">MLRFAPSPTGDMHIGNLRAAIFNYIVAKQQHKPFLIRIEDTDKERNIEGKDQEILEILKLMGMNWDKLVYQSHNIDYHREMAEKLLKENKAFYCYASVGFLEQEKEKAKNEKRPFRYLDEWAALEKNQHNTPVVRLKAPNHAVSFNDAIKKEVKFEPYELDSFVLLRKDKSPTYNFACACDDLLYEISLIIRGEDHVSNTPKQILIQQALGSNNPIIYAHLPIILDEASGKKMSKRDEASSVKWLLNQGFLPVAIVNYLITIGNKVPKEVFSLDEALEWFSLENLSNSPAHFNLKYLKHLNHQHLKRLDDEKLLELSQIKDRNLLGLLRLFIEECDTLLELKEKISLFLEPKDIVKTYENEDFKERCSILFNALKSMDFQAYKDFESFKKEAMRLSQLKGKDFFKPLRILLIGDSHGVELPLIFPYIQSHYQEILRLKA</sequence>
<protein>
    <recommendedName>
        <fullName evidence="1">Glutamate--tRNA ligase 1</fullName>
        <ecNumber evidence="1">6.1.1.17</ecNumber>
    </recommendedName>
    <alternativeName>
        <fullName evidence="1">Glutamyl-tRNA synthetase 1</fullName>
        <shortName evidence="1">GluRS 1</shortName>
    </alternativeName>
</protein>
<name>SYE1_HELAH</name>
<dbReference type="EC" id="6.1.1.17" evidence="1"/>
<dbReference type="EMBL" id="AM260522">
    <property type="protein sequence ID" value="CAJ99835.1"/>
    <property type="molecule type" value="Genomic_DNA"/>
</dbReference>
<dbReference type="RefSeq" id="WP_011577944.1">
    <property type="nucleotide sequence ID" value="NC_008229.1"/>
</dbReference>
<dbReference type="SMR" id="Q17WZ1"/>
<dbReference type="STRING" id="382638.Hac_1071"/>
<dbReference type="GeneID" id="31758432"/>
<dbReference type="KEGG" id="hac:Hac_1071"/>
<dbReference type="eggNOG" id="COG0008">
    <property type="taxonomic scope" value="Bacteria"/>
</dbReference>
<dbReference type="HOGENOM" id="CLU_015768_6_0_7"/>
<dbReference type="OrthoDB" id="9807503at2"/>
<dbReference type="BioCyc" id="HACI382638:HAC_RS04585-MONOMER"/>
<dbReference type="Proteomes" id="UP000000775">
    <property type="component" value="Chromosome"/>
</dbReference>
<dbReference type="GO" id="GO:0005829">
    <property type="term" value="C:cytosol"/>
    <property type="evidence" value="ECO:0007669"/>
    <property type="project" value="TreeGrafter"/>
</dbReference>
<dbReference type="GO" id="GO:0005524">
    <property type="term" value="F:ATP binding"/>
    <property type="evidence" value="ECO:0007669"/>
    <property type="project" value="UniProtKB-UniRule"/>
</dbReference>
<dbReference type="GO" id="GO:0004818">
    <property type="term" value="F:glutamate-tRNA ligase activity"/>
    <property type="evidence" value="ECO:0007669"/>
    <property type="project" value="UniProtKB-UniRule"/>
</dbReference>
<dbReference type="GO" id="GO:0000049">
    <property type="term" value="F:tRNA binding"/>
    <property type="evidence" value="ECO:0007669"/>
    <property type="project" value="InterPro"/>
</dbReference>
<dbReference type="GO" id="GO:0006424">
    <property type="term" value="P:glutamyl-tRNA aminoacylation"/>
    <property type="evidence" value="ECO:0007669"/>
    <property type="project" value="UniProtKB-UniRule"/>
</dbReference>
<dbReference type="FunFam" id="3.40.50.620:FF:000007">
    <property type="entry name" value="Glutamate--tRNA ligase"/>
    <property type="match status" value="1"/>
</dbReference>
<dbReference type="Gene3D" id="1.10.10.350">
    <property type="match status" value="1"/>
</dbReference>
<dbReference type="Gene3D" id="3.40.50.620">
    <property type="entry name" value="HUPs"/>
    <property type="match status" value="1"/>
</dbReference>
<dbReference type="HAMAP" id="MF_00022">
    <property type="entry name" value="Glu_tRNA_synth_type1"/>
    <property type="match status" value="1"/>
</dbReference>
<dbReference type="InterPro" id="IPR045462">
    <property type="entry name" value="aa-tRNA-synth_I_cd-bd"/>
</dbReference>
<dbReference type="InterPro" id="IPR020751">
    <property type="entry name" value="aa-tRNA-synth_I_codon-bd_sub2"/>
</dbReference>
<dbReference type="InterPro" id="IPR001412">
    <property type="entry name" value="aa-tRNA-synth_I_CS"/>
</dbReference>
<dbReference type="InterPro" id="IPR008925">
    <property type="entry name" value="aa_tRNA-synth_I_cd-bd_sf"/>
</dbReference>
<dbReference type="InterPro" id="IPR004527">
    <property type="entry name" value="Glu-tRNA-ligase_bac/mito"/>
</dbReference>
<dbReference type="InterPro" id="IPR000924">
    <property type="entry name" value="Glu/Gln-tRNA-synth"/>
</dbReference>
<dbReference type="InterPro" id="IPR020058">
    <property type="entry name" value="Glu/Gln-tRNA-synth_Ib_cat-dom"/>
</dbReference>
<dbReference type="InterPro" id="IPR049940">
    <property type="entry name" value="GluQ/Sye"/>
</dbReference>
<dbReference type="InterPro" id="IPR014729">
    <property type="entry name" value="Rossmann-like_a/b/a_fold"/>
</dbReference>
<dbReference type="NCBIfam" id="TIGR00464">
    <property type="entry name" value="gltX_bact"/>
    <property type="match status" value="1"/>
</dbReference>
<dbReference type="PANTHER" id="PTHR43311">
    <property type="entry name" value="GLUTAMATE--TRNA LIGASE"/>
    <property type="match status" value="1"/>
</dbReference>
<dbReference type="PANTHER" id="PTHR43311:SF2">
    <property type="entry name" value="GLUTAMATE--TRNA LIGASE, MITOCHONDRIAL-RELATED"/>
    <property type="match status" value="1"/>
</dbReference>
<dbReference type="Pfam" id="PF19269">
    <property type="entry name" value="Anticodon_2"/>
    <property type="match status" value="1"/>
</dbReference>
<dbReference type="Pfam" id="PF00749">
    <property type="entry name" value="tRNA-synt_1c"/>
    <property type="match status" value="1"/>
</dbReference>
<dbReference type="PRINTS" id="PR00987">
    <property type="entry name" value="TRNASYNTHGLU"/>
</dbReference>
<dbReference type="SUPFAM" id="SSF48163">
    <property type="entry name" value="An anticodon-binding domain of class I aminoacyl-tRNA synthetases"/>
    <property type="match status" value="1"/>
</dbReference>
<dbReference type="SUPFAM" id="SSF52374">
    <property type="entry name" value="Nucleotidylyl transferase"/>
    <property type="match status" value="1"/>
</dbReference>
<dbReference type="PROSITE" id="PS00178">
    <property type="entry name" value="AA_TRNA_LIGASE_I"/>
    <property type="match status" value="1"/>
</dbReference>
<reference key="1">
    <citation type="journal article" date="2006" name="PLoS Genet.">
        <title>Who ate whom? Adaptive Helicobacter genomic changes that accompanied a host jump from early humans to large felines.</title>
        <authorList>
            <person name="Eppinger M."/>
            <person name="Baar C."/>
            <person name="Linz B."/>
            <person name="Raddatz G."/>
            <person name="Lanz C."/>
            <person name="Keller H."/>
            <person name="Morelli G."/>
            <person name="Gressmann H."/>
            <person name="Achtman M."/>
            <person name="Schuster S.C."/>
        </authorList>
    </citation>
    <scope>NUCLEOTIDE SEQUENCE [LARGE SCALE GENOMIC DNA]</scope>
    <source>
        <strain>Sheeba</strain>
    </source>
</reference>
<feature type="chain" id="PRO_0000367680" description="Glutamate--tRNA ligase 1">
    <location>
        <begin position="1"/>
        <end position="439"/>
    </location>
</feature>
<feature type="short sequence motif" description="'HIGH' region" evidence="1">
    <location>
        <begin position="6"/>
        <end position="16"/>
    </location>
</feature>
<feature type="short sequence motif" description="'KMSKS' region" evidence="1">
    <location>
        <begin position="232"/>
        <end position="236"/>
    </location>
</feature>
<feature type="binding site" evidence="1">
    <location>
        <position position="235"/>
    </location>
    <ligand>
        <name>ATP</name>
        <dbReference type="ChEBI" id="CHEBI:30616"/>
    </ligand>
</feature>
<proteinExistence type="inferred from homology"/>
<evidence type="ECO:0000255" key="1">
    <source>
        <dbReference type="HAMAP-Rule" id="MF_00022"/>
    </source>
</evidence>
<accession>Q17WZ1</accession>